<protein>
    <recommendedName>
        <fullName>Sodium-dependent phosphate transporter 1</fullName>
    </recommendedName>
    <alternativeName>
        <fullName>Solute carrier family 20 member 1</fullName>
    </alternativeName>
</protein>
<evidence type="ECO:0000250" key="1">
    <source>
        <dbReference type="UniProtKB" id="Q8WUM9"/>
    </source>
</evidence>
<evidence type="ECO:0000255" key="2"/>
<evidence type="ECO:0000256" key="3">
    <source>
        <dbReference type="SAM" id="MobiDB-lite"/>
    </source>
</evidence>
<evidence type="ECO:0000305" key="4"/>
<dbReference type="EMBL" id="BC090608">
    <property type="protein sequence ID" value="AAH90608.1"/>
    <property type="molecule type" value="mRNA"/>
</dbReference>
<dbReference type="RefSeq" id="NP_001025568.1">
    <property type="nucleotide sequence ID" value="NM_001030397.1"/>
</dbReference>
<dbReference type="RefSeq" id="XP_012814579.1">
    <property type="nucleotide sequence ID" value="XM_012959125.3"/>
</dbReference>
<dbReference type="SMR" id="Q5BL44"/>
<dbReference type="FunCoup" id="Q5BL44">
    <property type="interactions" value="795"/>
</dbReference>
<dbReference type="STRING" id="8364.ENSXETP00000052159"/>
<dbReference type="TCDB" id="2.A.20.2.6">
    <property type="family name" value="the inorganic phosphate transporter (pit) family"/>
</dbReference>
<dbReference type="PaxDb" id="8364-ENSXETP00000041138"/>
<dbReference type="DNASU" id="594956"/>
<dbReference type="GeneID" id="594956"/>
<dbReference type="KEGG" id="xtr:594956"/>
<dbReference type="AGR" id="Xenbase:XB-GENE-482940"/>
<dbReference type="CTD" id="6574"/>
<dbReference type="Xenbase" id="XB-GENE-482940">
    <property type="gene designation" value="slc20a1"/>
</dbReference>
<dbReference type="eggNOG" id="KOG2493">
    <property type="taxonomic scope" value="Eukaryota"/>
</dbReference>
<dbReference type="HOGENOM" id="CLU_015355_3_1_1"/>
<dbReference type="InParanoid" id="Q5BL44"/>
<dbReference type="OMA" id="AGFWFFG"/>
<dbReference type="OrthoDB" id="260807at2759"/>
<dbReference type="PhylomeDB" id="Q5BL44"/>
<dbReference type="TreeFam" id="TF314426"/>
<dbReference type="Reactome" id="R-XTR-427652">
    <property type="pathway name" value="Sodium-coupled phosphate cotransporters"/>
</dbReference>
<dbReference type="Proteomes" id="UP000008143">
    <property type="component" value="Chromosome 3"/>
</dbReference>
<dbReference type="Bgee" id="ENSXETG00000018957">
    <property type="expression patterns" value="Expressed in mesonephros and 17 other cell types or tissues"/>
</dbReference>
<dbReference type="ExpressionAtlas" id="Q5BL44">
    <property type="expression patterns" value="baseline and differential"/>
</dbReference>
<dbReference type="GO" id="GO:0005886">
    <property type="term" value="C:plasma membrane"/>
    <property type="evidence" value="ECO:0000250"/>
    <property type="project" value="UniProtKB"/>
</dbReference>
<dbReference type="GO" id="GO:0005436">
    <property type="term" value="F:sodium:phosphate symporter activity"/>
    <property type="evidence" value="ECO:0000250"/>
    <property type="project" value="UniProtKB"/>
</dbReference>
<dbReference type="GO" id="GO:0006817">
    <property type="term" value="P:phosphate ion transport"/>
    <property type="evidence" value="ECO:0007669"/>
    <property type="project" value="UniProtKB-KW"/>
</dbReference>
<dbReference type="InterPro" id="IPR001204">
    <property type="entry name" value="Phos_transporter"/>
</dbReference>
<dbReference type="PANTHER" id="PTHR11101">
    <property type="entry name" value="PHOSPHATE TRANSPORTER"/>
    <property type="match status" value="1"/>
</dbReference>
<dbReference type="PANTHER" id="PTHR11101:SF46">
    <property type="entry name" value="SODIUM-DEPENDENT PHOSPHATE TRANSPORTER 1"/>
    <property type="match status" value="1"/>
</dbReference>
<dbReference type="Pfam" id="PF01384">
    <property type="entry name" value="PHO4"/>
    <property type="match status" value="1"/>
</dbReference>
<reference key="1">
    <citation type="submission" date="2005-02" db="EMBL/GenBank/DDBJ databases">
        <authorList>
            <consortium name="NIH - Xenopus Gene Collection (XGC) project"/>
        </authorList>
    </citation>
    <scope>NUCLEOTIDE SEQUENCE [LARGE SCALE MRNA]</scope>
    <source>
        <tissue>Embryo</tissue>
    </source>
</reference>
<accession>Q5BL44</accession>
<sequence length="685" mass="74860">MESTTAFSEVTSALGIENVKIMEPFLWMLVLGFVIAFVLAFSVGANDVANSFGTAVGSGVVTLRQACILASIFETVGSVLLGAKVSETIRKGLIDVNTYNTTQELLMAGSISAMFGSAVWQLAASFLKLPISGTHCIVGATIGFSLVAKGQQAIQWYELLRIVLSWFISPLLSGIMSALLFYFVRMFILRKADPVPNGLRALPIFYACTIGVNLFSIMYSGAPLLGFDKIPLWGIILISVGCAVLCALVVWFFVCPRMKRKIECEFKSSPSESPLMDKKNRELRCPILKPDPEDIKLPVDGGIVAEVKVPILDMVSVSRTEERTVTFKMGDCDDAVEKEKLNSMETNIDQPMNGSVQLPNGNHVQFSQTVSNQMNSSGQYQYHTVHKDSGLYKDLLHKLHLAKVGDCMGDSGDKPLRRNNSYTSYTMAICGMPLDSLRNRDAEARPDEAEKFTVHGADGKKRIRMDSYTSYCNAVADPQMDVEAEEQEEGSIEDVATDRKSSSSSLEERHDQDKPEVSLLFQFLQILTACFGSFAHGGNDVSNAIGPLVALYLVYESGDVTTKAATPIWLLLYGGVGICIGLWVWGRRVIQTMGKDLTPITPSSGFSIELASALTVVIASNVGLPISTTHCKVGSVVSVGWLRSKKAVDWRLFRNIFLAWFVTVPISGLISAAIMAVFKYAILKK</sequence>
<proteinExistence type="evidence at transcript level"/>
<organism>
    <name type="scientific">Xenopus tropicalis</name>
    <name type="common">Western clawed frog</name>
    <name type="synonym">Silurana tropicalis</name>
    <dbReference type="NCBI Taxonomy" id="8364"/>
    <lineage>
        <taxon>Eukaryota</taxon>
        <taxon>Metazoa</taxon>
        <taxon>Chordata</taxon>
        <taxon>Craniata</taxon>
        <taxon>Vertebrata</taxon>
        <taxon>Euteleostomi</taxon>
        <taxon>Amphibia</taxon>
        <taxon>Batrachia</taxon>
        <taxon>Anura</taxon>
        <taxon>Pipoidea</taxon>
        <taxon>Pipidae</taxon>
        <taxon>Xenopodinae</taxon>
        <taxon>Xenopus</taxon>
        <taxon>Silurana</taxon>
    </lineage>
</organism>
<keyword id="KW-1003">Cell membrane</keyword>
<keyword id="KW-0472">Membrane</keyword>
<keyword id="KW-0592">Phosphate transport</keyword>
<keyword id="KW-1185">Reference proteome</keyword>
<keyword id="KW-0769">Symport</keyword>
<keyword id="KW-0812">Transmembrane</keyword>
<keyword id="KW-1133">Transmembrane helix</keyword>
<keyword id="KW-0813">Transport</keyword>
<feature type="chain" id="PRO_0000080779" description="Sodium-dependent phosphate transporter 1">
    <location>
        <begin position="1"/>
        <end position="685"/>
    </location>
</feature>
<feature type="transmembrane region" description="Helical" evidence="2">
    <location>
        <begin position="25"/>
        <end position="45"/>
    </location>
</feature>
<feature type="transmembrane region" description="Helical" evidence="2">
    <location>
        <begin position="66"/>
        <end position="86"/>
    </location>
</feature>
<feature type="transmembrane region" description="Helical" evidence="2">
    <location>
        <begin position="106"/>
        <end position="126"/>
    </location>
</feature>
<feature type="transmembrane region" description="Helical" evidence="2">
    <location>
        <begin position="162"/>
        <end position="182"/>
    </location>
</feature>
<feature type="transmembrane region" description="Helical" evidence="2">
    <location>
        <begin position="201"/>
        <end position="221"/>
    </location>
</feature>
<feature type="transmembrane region" description="Helical" evidence="2">
    <location>
        <begin position="234"/>
        <end position="254"/>
    </location>
</feature>
<feature type="transmembrane region" description="Helical" evidence="2">
    <location>
        <begin position="517"/>
        <end position="537"/>
    </location>
</feature>
<feature type="transmembrane region" description="Helical" evidence="2">
    <location>
        <begin position="565"/>
        <end position="585"/>
    </location>
</feature>
<feature type="transmembrane region" description="Helical" evidence="2">
    <location>
        <begin position="606"/>
        <end position="626"/>
    </location>
</feature>
<feature type="transmembrane region" description="Helical" evidence="2">
    <location>
        <begin position="656"/>
        <end position="676"/>
    </location>
</feature>
<feature type="region of interest" description="Disordered" evidence="3">
    <location>
        <begin position="482"/>
        <end position="513"/>
    </location>
</feature>
<feature type="compositionally biased region" description="Acidic residues" evidence="3">
    <location>
        <begin position="482"/>
        <end position="492"/>
    </location>
</feature>
<feature type="compositionally biased region" description="Basic and acidic residues" evidence="3">
    <location>
        <begin position="496"/>
        <end position="513"/>
    </location>
</feature>
<gene>
    <name type="primary">slc20a1</name>
</gene>
<comment type="function">
    <text evidence="1">Sodium-phosphate symporter which preferentially transports the monovalent form of phosphate with a stoichiometry of two sodium ions per phosphate ion.</text>
</comment>
<comment type="catalytic activity">
    <reaction evidence="1">
        <text>2 Na(+)(out) + phosphate(out) = 2 Na(+)(in) + phosphate(in)</text>
        <dbReference type="Rhea" id="RHEA:71259"/>
        <dbReference type="ChEBI" id="CHEBI:29101"/>
        <dbReference type="ChEBI" id="CHEBI:43474"/>
    </reaction>
</comment>
<comment type="subcellular location">
    <subcellularLocation>
        <location evidence="1">Cell membrane</location>
        <topology evidence="2">Multi-pass membrane protein</topology>
    </subcellularLocation>
</comment>
<comment type="similarity">
    <text evidence="4">Belongs to the inorganic phosphate transporter (PiT) (TC 2.A.20) family.</text>
</comment>
<name>S20A1_XENTR</name>